<dbReference type="EC" id="3.4.19.3"/>
<dbReference type="EMBL" id="Y13966">
    <property type="protein sequence ID" value="CAA74299.1"/>
    <property type="molecule type" value="Genomic_DNA"/>
</dbReference>
<dbReference type="EMBL" id="CP006670">
    <property type="protein sequence ID" value="EHR78169.1"/>
    <property type="molecule type" value="Genomic_DNA"/>
</dbReference>
<dbReference type="RefSeq" id="WP_004068885.1">
    <property type="nucleotide sequence ID" value="NC_022084.1"/>
</dbReference>
<dbReference type="PDB" id="1A2Z">
    <property type="method" value="X-ray"/>
    <property type="resolution" value="1.73 A"/>
    <property type="chains" value="A/B/C/D=1-220"/>
</dbReference>
<dbReference type="PDBsum" id="1A2Z"/>
<dbReference type="SMR" id="O07883"/>
<dbReference type="STRING" id="523849.OCC_03923"/>
<dbReference type="MEROPS" id="C15.001"/>
<dbReference type="PaxDb" id="523849-OCC_03923"/>
<dbReference type="GeneID" id="16550208"/>
<dbReference type="KEGG" id="tlt:OCC_03923"/>
<dbReference type="HOGENOM" id="CLU_043960_4_0_2"/>
<dbReference type="OrthoDB" id="39672at2157"/>
<dbReference type="BRENDA" id="3.4.19.3">
    <property type="organism ID" value="6302"/>
</dbReference>
<dbReference type="EvolutionaryTrace" id="O07883"/>
<dbReference type="Proteomes" id="UP000015502">
    <property type="component" value="Chromosome"/>
</dbReference>
<dbReference type="GO" id="GO:0005829">
    <property type="term" value="C:cytosol"/>
    <property type="evidence" value="ECO:0007669"/>
    <property type="project" value="InterPro"/>
</dbReference>
<dbReference type="GO" id="GO:0016920">
    <property type="term" value="F:pyroglutamyl-peptidase activity"/>
    <property type="evidence" value="ECO:0007669"/>
    <property type="project" value="UniProtKB-UniRule"/>
</dbReference>
<dbReference type="GO" id="GO:0006508">
    <property type="term" value="P:proteolysis"/>
    <property type="evidence" value="ECO:0007669"/>
    <property type="project" value="UniProtKB-KW"/>
</dbReference>
<dbReference type="CDD" id="cd00501">
    <property type="entry name" value="Peptidase_C15"/>
    <property type="match status" value="1"/>
</dbReference>
<dbReference type="FunFam" id="3.40.630.20:FF:000001">
    <property type="entry name" value="Pyrrolidone-carboxylate peptidase"/>
    <property type="match status" value="1"/>
</dbReference>
<dbReference type="Gene3D" id="3.40.630.20">
    <property type="entry name" value="Peptidase C15, pyroglutamyl peptidase I-like"/>
    <property type="match status" value="1"/>
</dbReference>
<dbReference type="HAMAP" id="MF_00417">
    <property type="entry name" value="Pyrrolid_peptidase"/>
    <property type="match status" value="1"/>
</dbReference>
<dbReference type="InterPro" id="IPR000816">
    <property type="entry name" value="Peptidase_C15"/>
</dbReference>
<dbReference type="InterPro" id="IPR016125">
    <property type="entry name" value="Peptidase_C15-like"/>
</dbReference>
<dbReference type="InterPro" id="IPR036440">
    <property type="entry name" value="Peptidase_C15-like_sf"/>
</dbReference>
<dbReference type="InterPro" id="IPR029762">
    <property type="entry name" value="PGP-I_bact-type"/>
</dbReference>
<dbReference type="InterPro" id="IPR033694">
    <property type="entry name" value="PGPEP1_Cys_AS"/>
</dbReference>
<dbReference type="InterPro" id="IPR033693">
    <property type="entry name" value="PGPEP1_Glu_AS"/>
</dbReference>
<dbReference type="NCBIfam" id="NF009673">
    <property type="entry name" value="PRK13194.1"/>
    <property type="match status" value="1"/>
</dbReference>
<dbReference type="NCBIfam" id="NF009676">
    <property type="entry name" value="PRK13197.1"/>
    <property type="match status" value="1"/>
</dbReference>
<dbReference type="NCBIfam" id="TIGR00504">
    <property type="entry name" value="pyro_pdase"/>
    <property type="match status" value="1"/>
</dbReference>
<dbReference type="PANTHER" id="PTHR23402">
    <property type="entry name" value="PROTEASE FAMILY C15 PYROGLUTAMYL-PEPTIDASE I-RELATED"/>
    <property type="match status" value="1"/>
</dbReference>
<dbReference type="PANTHER" id="PTHR23402:SF1">
    <property type="entry name" value="PYROGLUTAMYL-PEPTIDASE I"/>
    <property type="match status" value="1"/>
</dbReference>
<dbReference type="Pfam" id="PF01470">
    <property type="entry name" value="Peptidase_C15"/>
    <property type="match status" value="1"/>
</dbReference>
<dbReference type="PIRSF" id="PIRSF015592">
    <property type="entry name" value="Prld-crbxl_pptds"/>
    <property type="match status" value="1"/>
</dbReference>
<dbReference type="PRINTS" id="PR00706">
    <property type="entry name" value="PYROGLUPTASE"/>
</dbReference>
<dbReference type="SUPFAM" id="SSF53182">
    <property type="entry name" value="Pyrrolidone carboxyl peptidase (pyroglutamate aminopeptidase)"/>
    <property type="match status" value="1"/>
</dbReference>
<dbReference type="PROSITE" id="PS01334">
    <property type="entry name" value="PYRASE_CYS"/>
    <property type="match status" value="1"/>
</dbReference>
<dbReference type="PROSITE" id="PS01333">
    <property type="entry name" value="PYRASE_GLU"/>
    <property type="match status" value="1"/>
</dbReference>
<name>PCP_THELN</name>
<reference key="1">
    <citation type="journal article" date="2000" name="Extremophiles">
        <title>Cloning, expression, and characterization of pyrrolidone carboxyl peptidase from the archaeon Thermococcus litoralis.</title>
        <authorList>
            <person name="Singleton M.R."/>
            <person name="Taylor S.J.C."/>
            <person name="Parrat J.S."/>
            <person name="Littlechild J.A."/>
        </authorList>
    </citation>
    <scope>NUCLEOTIDE SEQUENCE [GENOMIC DNA]</scope>
    <scope>CHARACTERIZATION</scope>
    <source>
        <strain>ATCC 51850 / DSM 5473 / JCM 8560 / NS-C</strain>
    </source>
</reference>
<reference key="2">
    <citation type="journal article" date="2012" name="J. Bacteriol.">
        <title>Genome sequence of the model hyperthermophilic archaeon Thermococcus litoralis NS-C.</title>
        <authorList>
            <person name="Gardner A.F."/>
            <person name="Kumar S."/>
            <person name="Perler F.B."/>
        </authorList>
    </citation>
    <scope>NUCLEOTIDE SEQUENCE [LARGE SCALE GENOMIC DNA]</scope>
    <source>
        <strain>ATCC 51850 / DSM 5473 / JCM 8560 / NS-C</strain>
    </source>
</reference>
<reference key="3">
    <citation type="journal article" date="1999" name="Acta Crystallogr. D">
        <title>Crystallization and preliminary X-ray diffraction studies of pyrrolidone carboxyl peptidase from the hyperthermophilic archaeon Thermococcus litoralis.</title>
        <authorList>
            <person name="Singleton M.R."/>
            <person name="Isupov M.N."/>
            <person name="Littlechild J.A."/>
        </authorList>
    </citation>
    <scope>CRYSTALLIZATION</scope>
</reference>
<reference key="4">
    <citation type="journal article" date="1999" name="Structure">
        <title>X-ray structure of pyrrolidone carboxyl peptidase from the hyperthermophilic archaeon Thermococcus litoralis.</title>
        <authorList>
            <person name="Singleton M.R."/>
            <person name="Isupov M.N."/>
            <person name="Littlechild J.A."/>
        </authorList>
    </citation>
    <scope>X-RAY CRYSTALLOGRAPHY (1.73 ANGSTROMS)</scope>
</reference>
<protein>
    <recommendedName>
        <fullName>Pyrrolidone-carboxylate peptidase</fullName>
        <ecNumber>3.4.19.3</ecNumber>
    </recommendedName>
    <alternativeName>
        <fullName>5-oxoprolyl-peptidase</fullName>
    </alternativeName>
    <alternativeName>
        <fullName>Pyroglutamyl-peptidase I</fullName>
        <shortName>PGP-I</shortName>
    </alternativeName>
</protein>
<accession>O07883</accession>
<accession>H3ZQF6</accession>
<feature type="chain" id="PRO_0000184760" description="Pyrrolidone-carboxylate peptidase">
    <location>
        <begin position="1"/>
        <end position="220"/>
    </location>
</feature>
<feature type="active site">
    <location>
        <position position="80"/>
    </location>
</feature>
<feature type="active site">
    <location>
        <position position="143"/>
    </location>
</feature>
<feature type="active site">
    <location>
        <position position="167"/>
    </location>
</feature>
<feature type="disulfide bond" description="Interchain">
    <location>
        <position position="190"/>
    </location>
</feature>
<feature type="strand" evidence="2">
    <location>
        <begin position="2"/>
        <end position="9"/>
    </location>
</feature>
<feature type="helix" evidence="2">
    <location>
        <begin position="19"/>
        <end position="27"/>
    </location>
</feature>
<feature type="strand" evidence="2">
    <location>
        <begin position="35"/>
        <end position="42"/>
    </location>
</feature>
<feature type="helix" evidence="2">
    <location>
        <begin position="46"/>
        <end position="60"/>
    </location>
</feature>
<feature type="strand" evidence="2">
    <location>
        <begin position="63"/>
        <end position="70"/>
    </location>
</feature>
<feature type="strand" evidence="2">
    <location>
        <begin position="75"/>
        <end position="80"/>
    </location>
</feature>
<feature type="strand" evidence="2">
    <location>
        <begin position="82"/>
        <end position="85"/>
    </location>
</feature>
<feature type="strand" evidence="2">
    <location>
        <begin position="100"/>
        <end position="102"/>
    </location>
</feature>
<feature type="strand" evidence="2">
    <location>
        <begin position="110"/>
        <end position="113"/>
    </location>
</feature>
<feature type="helix" evidence="2">
    <location>
        <begin position="118"/>
        <end position="127"/>
    </location>
</feature>
<feature type="strand" evidence="2">
    <location>
        <begin position="132"/>
        <end position="136"/>
    </location>
</feature>
<feature type="helix" evidence="2">
    <location>
        <begin position="142"/>
        <end position="157"/>
    </location>
</feature>
<feature type="strand" evidence="2">
    <location>
        <begin position="161"/>
        <end position="168"/>
    </location>
</feature>
<feature type="helix" evidence="2">
    <location>
        <begin position="172"/>
        <end position="175"/>
    </location>
</feature>
<feature type="strand" evidence="2">
    <location>
        <begin position="179"/>
        <end position="181"/>
    </location>
</feature>
<feature type="helix" evidence="2">
    <location>
        <begin position="191"/>
        <end position="210"/>
    </location>
</feature>
<sequence length="220" mass="24747">MKKVLITGFEPFGGDSKNPTEQIAKYFDRKQIGNAMVYGRVLPVSVKRATIELKRYLEEIKPEIVINLGLAPTYSNITVERIAVNIIDARIPDNDGYQPIDEKIEEDAPLAYMATLPVRAITKTLRDNGIPATISYSAGTYLCNYVMFKTLHFSKIEGYPLKAGFIHVPYTPDQVVNKFFLLGKNTPSMCLEAEIKAIELAVKVSLDYLEKDRDDIKIPL</sequence>
<comment type="function">
    <text>Removes 5-oxoproline from various penultimate amino acid residues except L-proline.</text>
</comment>
<comment type="catalytic activity">
    <reaction>
        <text>Release of an N-terminal pyroglutamyl group from a polypeptide, the second amino acid generally not being Pro.</text>
        <dbReference type="EC" id="3.4.19.3"/>
    </reaction>
</comment>
<comment type="subunit">
    <text>Homotetramer.</text>
</comment>
<comment type="subcellular location">
    <subcellularLocation>
        <location>Cytoplasm</location>
    </subcellularLocation>
</comment>
<comment type="similarity">
    <text evidence="1">Belongs to the peptidase C15 family.</text>
</comment>
<organism>
    <name type="scientific">Thermococcus litoralis (strain ATCC 51850 / DSM 5473 / JCM 8560 / NS-C)</name>
    <dbReference type="NCBI Taxonomy" id="523849"/>
    <lineage>
        <taxon>Archaea</taxon>
        <taxon>Methanobacteriati</taxon>
        <taxon>Methanobacteriota</taxon>
        <taxon>Thermococci</taxon>
        <taxon>Thermococcales</taxon>
        <taxon>Thermococcaceae</taxon>
        <taxon>Thermococcus</taxon>
    </lineage>
</organism>
<keyword id="KW-0002">3D-structure</keyword>
<keyword id="KW-0963">Cytoplasm</keyword>
<keyword id="KW-1015">Disulfide bond</keyword>
<keyword id="KW-0378">Hydrolase</keyword>
<keyword id="KW-0645">Protease</keyword>
<keyword id="KW-0788">Thiol protease</keyword>
<gene>
    <name type="primary">pcp</name>
    <name type="ORF">OCC_03923</name>
</gene>
<proteinExistence type="evidence at protein level"/>
<evidence type="ECO:0000305" key="1"/>
<evidence type="ECO:0007829" key="2">
    <source>
        <dbReference type="PDB" id="1A2Z"/>
    </source>
</evidence>